<evidence type="ECO:0000255" key="1">
    <source>
        <dbReference type="HAMAP-Rule" id="MF_01333"/>
    </source>
</evidence>
<evidence type="ECO:0000305" key="2"/>
<proteinExistence type="inferred from homology"/>
<dbReference type="EMBL" id="AP010918">
    <property type="protein sequence ID" value="BAH25029.1"/>
    <property type="molecule type" value="Genomic_DNA"/>
</dbReference>
<dbReference type="RefSeq" id="WP_012666333.1">
    <property type="nucleotide sequence ID" value="NZ_CP014566.1"/>
</dbReference>
<dbReference type="SMR" id="C1AL50"/>
<dbReference type="KEGG" id="mbt:JTY_0736"/>
<dbReference type="HOGENOM" id="CLU_061015_2_1_11"/>
<dbReference type="GO" id="GO:1990904">
    <property type="term" value="C:ribonucleoprotein complex"/>
    <property type="evidence" value="ECO:0007669"/>
    <property type="project" value="UniProtKB-KW"/>
</dbReference>
<dbReference type="GO" id="GO:0005840">
    <property type="term" value="C:ribosome"/>
    <property type="evidence" value="ECO:0007669"/>
    <property type="project" value="UniProtKB-KW"/>
</dbReference>
<dbReference type="GO" id="GO:0019843">
    <property type="term" value="F:rRNA binding"/>
    <property type="evidence" value="ECO:0007669"/>
    <property type="project" value="UniProtKB-UniRule"/>
</dbReference>
<dbReference type="GO" id="GO:0003735">
    <property type="term" value="F:structural constituent of ribosome"/>
    <property type="evidence" value="ECO:0007669"/>
    <property type="project" value="InterPro"/>
</dbReference>
<dbReference type="GO" id="GO:0000049">
    <property type="term" value="F:tRNA binding"/>
    <property type="evidence" value="ECO:0007669"/>
    <property type="project" value="UniProtKB-UniRule"/>
</dbReference>
<dbReference type="GO" id="GO:0006412">
    <property type="term" value="P:translation"/>
    <property type="evidence" value="ECO:0007669"/>
    <property type="project" value="UniProtKB-UniRule"/>
</dbReference>
<dbReference type="FunFam" id="3.30.1440.10:FF:000001">
    <property type="entry name" value="50S ribosomal protein L5"/>
    <property type="match status" value="1"/>
</dbReference>
<dbReference type="Gene3D" id="3.30.1440.10">
    <property type="match status" value="1"/>
</dbReference>
<dbReference type="HAMAP" id="MF_01333_B">
    <property type="entry name" value="Ribosomal_uL5_B"/>
    <property type="match status" value="1"/>
</dbReference>
<dbReference type="InterPro" id="IPR002132">
    <property type="entry name" value="Ribosomal_uL5"/>
</dbReference>
<dbReference type="InterPro" id="IPR020930">
    <property type="entry name" value="Ribosomal_uL5_bac-type"/>
</dbReference>
<dbReference type="InterPro" id="IPR031309">
    <property type="entry name" value="Ribosomal_uL5_C"/>
</dbReference>
<dbReference type="InterPro" id="IPR022803">
    <property type="entry name" value="Ribosomal_uL5_dom_sf"/>
</dbReference>
<dbReference type="InterPro" id="IPR031310">
    <property type="entry name" value="Ribosomal_uL5_N"/>
</dbReference>
<dbReference type="NCBIfam" id="NF000585">
    <property type="entry name" value="PRK00010.1"/>
    <property type="match status" value="1"/>
</dbReference>
<dbReference type="PANTHER" id="PTHR11994">
    <property type="entry name" value="60S RIBOSOMAL PROTEIN L11-RELATED"/>
    <property type="match status" value="1"/>
</dbReference>
<dbReference type="Pfam" id="PF00281">
    <property type="entry name" value="Ribosomal_L5"/>
    <property type="match status" value="1"/>
</dbReference>
<dbReference type="Pfam" id="PF00673">
    <property type="entry name" value="Ribosomal_L5_C"/>
    <property type="match status" value="1"/>
</dbReference>
<dbReference type="PIRSF" id="PIRSF002161">
    <property type="entry name" value="Ribosomal_L5"/>
    <property type="match status" value="1"/>
</dbReference>
<dbReference type="SUPFAM" id="SSF55282">
    <property type="entry name" value="RL5-like"/>
    <property type="match status" value="1"/>
</dbReference>
<name>RL5_MYCBT</name>
<keyword id="KW-0687">Ribonucleoprotein</keyword>
<keyword id="KW-0689">Ribosomal protein</keyword>
<keyword id="KW-0694">RNA-binding</keyword>
<keyword id="KW-0699">rRNA-binding</keyword>
<keyword id="KW-0820">tRNA-binding</keyword>
<sequence>MTTAQKVQPRLKERYRSEIRDALRKQFGYGNVMQIPTVTKVVVNMGVGEAARDAKLINGAVNDLALITGQKPEVRRARKSIAQFKLREGMPVGVRVTLRGDRMWEFLDRLTSIALPRIRDFRGLSPKQFDGVGSYTFGLAEQAVFHEVDVDKIDRVRGMDINVVTSAATDDEGRALLRALGFPFKEN</sequence>
<comment type="function">
    <text evidence="1">This is one of the proteins that bind and probably mediate the attachment of the 5S RNA into the large ribosomal subunit, where it forms part of the central protuberance. In the 70S ribosome it contacts protein S13 of the 30S subunit (bridge B1b), connecting the 2 subunits; this bridge is implicated in subunit movement. Contacts the P site tRNA; the 5S rRNA and some of its associated proteins might help stabilize positioning of ribosome-bound tRNAs.</text>
</comment>
<comment type="subunit">
    <text evidence="1">Part of the 50S ribosomal subunit; part of the 5S rRNA/L5/L18/L25 subcomplex. Contacts the 5S rRNA and the P site tRNA. Forms a bridge to the 30S subunit in the 70S ribosome.</text>
</comment>
<comment type="similarity">
    <text evidence="1">Belongs to the universal ribosomal protein uL5 family.</text>
</comment>
<organism>
    <name type="scientific">Mycobacterium bovis (strain BCG / Tokyo 172 / ATCC 35737 / TMC 1019)</name>
    <dbReference type="NCBI Taxonomy" id="561275"/>
    <lineage>
        <taxon>Bacteria</taxon>
        <taxon>Bacillati</taxon>
        <taxon>Actinomycetota</taxon>
        <taxon>Actinomycetes</taxon>
        <taxon>Mycobacteriales</taxon>
        <taxon>Mycobacteriaceae</taxon>
        <taxon>Mycobacterium</taxon>
        <taxon>Mycobacterium tuberculosis complex</taxon>
    </lineage>
</organism>
<accession>C1AL50</accession>
<reference key="1">
    <citation type="journal article" date="2009" name="Vaccine">
        <title>Whole genome sequence analysis of Mycobacterium bovis bacillus Calmette-Guerin (BCG) Tokyo 172: a comparative study of BCG vaccine substrains.</title>
        <authorList>
            <person name="Seki M."/>
            <person name="Honda I."/>
            <person name="Fujita I."/>
            <person name="Yano I."/>
            <person name="Yamamoto S."/>
            <person name="Koyama A."/>
        </authorList>
    </citation>
    <scope>NUCLEOTIDE SEQUENCE [LARGE SCALE GENOMIC DNA]</scope>
    <source>
        <strain>BCG / Tokyo 172 / ATCC 35737 / TMC 1019</strain>
    </source>
</reference>
<feature type="chain" id="PRO_1000166139" description="Large ribosomal subunit protein uL5">
    <location>
        <begin position="1"/>
        <end position="187"/>
    </location>
</feature>
<protein>
    <recommendedName>
        <fullName evidence="1">Large ribosomal subunit protein uL5</fullName>
    </recommendedName>
    <alternativeName>
        <fullName evidence="2">50S ribosomal protein L5</fullName>
    </alternativeName>
</protein>
<gene>
    <name evidence="1" type="primary">rplE</name>
    <name type="ordered locus">JTY_0736</name>
</gene>